<evidence type="ECO:0000255" key="1">
    <source>
        <dbReference type="HAMAP-Rule" id="MF_01162"/>
    </source>
</evidence>
<sequence length="719" mass="80537">MLFGFFRNLFRVLYRVRVTGDVQALQGNRVLITPNHVSFIDGMLLALFLPVRPVFAVYTSISQQWYMRWLTPLIDFVPLDPTKPMSIKHLVRLVEQGRPVVIFPEGRISVTGSLMKIYDGAGFVAAKSGATVIPLRIDGAELTPFSRLKGLVKRRLFPRIQLHILPPTQIPMPEAPRARDRRKIAGEMLHQIMMEARMAVRPRETLYESLLAAQYRYGAGKNCIEDINFTPDTYRKLLTKTLFVGRILEKYSVEGEKIGLMLPNAAISAAVIFGAVSRRRIPAMMNYTAGVKGLTSAITAAEIKTIFTSRQFLDKGKLWHLPEQLTQVRWVYLEDLKADVTPADKLWIFAHLLAPRLAQVKQQPEDEAIILFTSGSEGHPKGVVHSHKSILANVEQIKTIADFTANDRFMSALPLFHSFGLTVGLFTPLLTGAEVFLYPSPLHYRIVPELVYDRNCTVLFGTSTFLGNYARFANPYDFYRLRYVVAGAEKLQESTKQLWQDKFGLRILEGYGVTECAPVVSINVPMAAKPGTVGRILPGMDARLLAVPGIENGGRLQLKGPNIMNGYLRVEKPGVLEVPSAENARGETERGWYDTGDIVRFDENGFVQIQGRAKRFAKIAGEMVSLEMVEQLALGVSAEKMHATAIKSDASKGEALVLFTTDSELTREKLQHYAREHGIPELAVPRDIRYLKQLPLLGSGKPDFVTLKSWVDAPEQHHE</sequence>
<dbReference type="EC" id="2.3.1.40" evidence="1"/>
<dbReference type="EC" id="6.2.1.20" evidence="1"/>
<dbReference type="EMBL" id="AE017220">
    <property type="protein sequence ID" value="AAX66855.1"/>
    <property type="molecule type" value="Genomic_DNA"/>
</dbReference>
<dbReference type="RefSeq" id="WP_000896083.1">
    <property type="nucleotide sequence ID" value="NC_006905.1"/>
</dbReference>
<dbReference type="SMR" id="Q57KA7"/>
<dbReference type="KEGG" id="sec:SCH_2949"/>
<dbReference type="HOGENOM" id="CLU_000022_59_8_6"/>
<dbReference type="Proteomes" id="UP000000538">
    <property type="component" value="Chromosome"/>
</dbReference>
<dbReference type="GO" id="GO:0005886">
    <property type="term" value="C:plasma membrane"/>
    <property type="evidence" value="ECO:0007669"/>
    <property type="project" value="UniProtKB-SubCell"/>
</dbReference>
<dbReference type="GO" id="GO:0008779">
    <property type="term" value="F:acyl-[acyl-carrier-protein]-phospholipid O-acyltransferase activity"/>
    <property type="evidence" value="ECO:0007669"/>
    <property type="project" value="UniProtKB-UniRule"/>
</dbReference>
<dbReference type="GO" id="GO:0005524">
    <property type="term" value="F:ATP binding"/>
    <property type="evidence" value="ECO:0007669"/>
    <property type="project" value="UniProtKB-KW"/>
</dbReference>
<dbReference type="GO" id="GO:0008922">
    <property type="term" value="F:long-chain fatty acid [acyl-carrier-protein] ligase activity"/>
    <property type="evidence" value="ECO:0007669"/>
    <property type="project" value="UniProtKB-UniRule"/>
</dbReference>
<dbReference type="GO" id="GO:0031956">
    <property type="term" value="F:medium-chain fatty acid-CoA ligase activity"/>
    <property type="evidence" value="ECO:0007669"/>
    <property type="project" value="TreeGrafter"/>
</dbReference>
<dbReference type="GO" id="GO:0006631">
    <property type="term" value="P:fatty acid metabolic process"/>
    <property type="evidence" value="ECO:0007669"/>
    <property type="project" value="InterPro"/>
</dbReference>
<dbReference type="GO" id="GO:0008654">
    <property type="term" value="P:phospholipid biosynthetic process"/>
    <property type="evidence" value="ECO:0007669"/>
    <property type="project" value="InterPro"/>
</dbReference>
<dbReference type="CDD" id="cd05909">
    <property type="entry name" value="AAS_C"/>
    <property type="match status" value="1"/>
</dbReference>
<dbReference type="CDD" id="cd07989">
    <property type="entry name" value="LPLAT_AGPAT-like"/>
    <property type="match status" value="1"/>
</dbReference>
<dbReference type="FunFam" id="3.30.300.30:FF:000009">
    <property type="entry name" value="Bifunctional protein Aas"/>
    <property type="match status" value="1"/>
</dbReference>
<dbReference type="FunFam" id="3.40.50.12780:FF:000009">
    <property type="entry name" value="Bifunctional protein Aas"/>
    <property type="match status" value="1"/>
</dbReference>
<dbReference type="Gene3D" id="3.30.300.30">
    <property type="match status" value="1"/>
</dbReference>
<dbReference type="Gene3D" id="3.40.50.12780">
    <property type="entry name" value="N-terminal domain of ligase-like"/>
    <property type="match status" value="1"/>
</dbReference>
<dbReference type="HAMAP" id="MF_01162">
    <property type="entry name" value="Aas"/>
    <property type="match status" value="1"/>
</dbReference>
<dbReference type="InterPro" id="IPR023775">
    <property type="entry name" value="Aas"/>
</dbReference>
<dbReference type="InterPro" id="IPR045851">
    <property type="entry name" value="AMP-bd_C_sf"/>
</dbReference>
<dbReference type="InterPro" id="IPR020845">
    <property type="entry name" value="AMP-binding_CS"/>
</dbReference>
<dbReference type="InterPro" id="IPR000873">
    <property type="entry name" value="AMP-dep_synth/lig_dom"/>
</dbReference>
<dbReference type="InterPro" id="IPR042099">
    <property type="entry name" value="ANL_N_sf"/>
</dbReference>
<dbReference type="InterPro" id="IPR002123">
    <property type="entry name" value="Plipid/glycerol_acylTrfase"/>
</dbReference>
<dbReference type="NCBIfam" id="NF005959">
    <property type="entry name" value="PRK08043.1"/>
    <property type="match status" value="1"/>
</dbReference>
<dbReference type="PANTHER" id="PTHR43201">
    <property type="entry name" value="ACYL-COA SYNTHETASE"/>
    <property type="match status" value="1"/>
</dbReference>
<dbReference type="PANTHER" id="PTHR43201:SF8">
    <property type="entry name" value="ACYL-COA SYNTHETASE FAMILY MEMBER 3"/>
    <property type="match status" value="1"/>
</dbReference>
<dbReference type="Pfam" id="PF01553">
    <property type="entry name" value="Acyltransferase"/>
    <property type="match status" value="1"/>
</dbReference>
<dbReference type="Pfam" id="PF00501">
    <property type="entry name" value="AMP-binding"/>
    <property type="match status" value="1"/>
</dbReference>
<dbReference type="SMART" id="SM00563">
    <property type="entry name" value="PlsC"/>
    <property type="match status" value="1"/>
</dbReference>
<dbReference type="SUPFAM" id="SSF56801">
    <property type="entry name" value="Acetyl-CoA synthetase-like"/>
    <property type="match status" value="1"/>
</dbReference>
<dbReference type="SUPFAM" id="SSF69593">
    <property type="entry name" value="Glycerol-3-phosphate (1)-acyltransferase"/>
    <property type="match status" value="1"/>
</dbReference>
<dbReference type="PROSITE" id="PS00455">
    <property type="entry name" value="AMP_BINDING"/>
    <property type="match status" value="1"/>
</dbReference>
<keyword id="KW-0012">Acyltransferase</keyword>
<keyword id="KW-0067">ATP-binding</keyword>
<keyword id="KW-0997">Cell inner membrane</keyword>
<keyword id="KW-1003">Cell membrane</keyword>
<keyword id="KW-0436">Ligase</keyword>
<keyword id="KW-0472">Membrane</keyword>
<keyword id="KW-0511">Multifunctional enzyme</keyword>
<keyword id="KW-0547">Nucleotide-binding</keyword>
<keyword id="KW-0808">Transferase</keyword>
<keyword id="KW-0812">Transmembrane</keyword>
<keyword id="KW-1133">Transmembrane helix</keyword>
<organism>
    <name type="scientific">Salmonella choleraesuis (strain SC-B67)</name>
    <dbReference type="NCBI Taxonomy" id="321314"/>
    <lineage>
        <taxon>Bacteria</taxon>
        <taxon>Pseudomonadati</taxon>
        <taxon>Pseudomonadota</taxon>
        <taxon>Gammaproteobacteria</taxon>
        <taxon>Enterobacterales</taxon>
        <taxon>Enterobacteriaceae</taxon>
        <taxon>Salmonella</taxon>
    </lineage>
</organism>
<gene>
    <name evidence="1" type="primary">aas</name>
    <name type="ordered locus">SCH_2949</name>
</gene>
<accession>Q57KA7</accession>
<feature type="chain" id="PRO_1000065642" description="Bifunctional protein Aas">
    <location>
        <begin position="1"/>
        <end position="719"/>
    </location>
</feature>
<feature type="transmembrane region" description="Helical" evidence="1">
    <location>
        <begin position="258"/>
        <end position="277"/>
    </location>
</feature>
<feature type="transmembrane region" description="Helical" evidence="1">
    <location>
        <begin position="409"/>
        <end position="433"/>
    </location>
</feature>
<feature type="region of interest" description="Acyltransferase">
    <location>
        <begin position="15"/>
        <end position="138"/>
    </location>
</feature>
<feature type="region of interest" description="AMP-binding">
    <location>
        <begin position="233"/>
        <end position="646"/>
    </location>
</feature>
<feature type="active site" evidence="1">
    <location>
        <position position="36"/>
    </location>
</feature>
<comment type="function">
    <text evidence="1">Plays a role in lysophospholipid acylation. Transfers fatty acids to the 1-position via an enzyme-bound acyl-ACP intermediate in the presence of ATP and magnesium. Its physiological function is to regenerate phosphatidylethanolamine from 2-acyl-glycero-3-phosphoethanolamine (2-acyl-GPE) formed by transacylation reactions or degradation by phospholipase A1.</text>
</comment>
<comment type="catalytic activity">
    <reaction evidence="1">
        <text>a 2-acyl-sn-glycero-3-phosphoethanolamine + a fatty acyl-[ACP] = a 1,2-diacyl-sn-glycero-3-phosphoethanolamine + holo-[ACP]</text>
        <dbReference type="Rhea" id="RHEA:10304"/>
        <dbReference type="Rhea" id="RHEA-COMP:9685"/>
        <dbReference type="Rhea" id="RHEA-COMP:14125"/>
        <dbReference type="ChEBI" id="CHEBI:64479"/>
        <dbReference type="ChEBI" id="CHEBI:64612"/>
        <dbReference type="ChEBI" id="CHEBI:65213"/>
        <dbReference type="ChEBI" id="CHEBI:138651"/>
        <dbReference type="EC" id="2.3.1.40"/>
    </reaction>
</comment>
<comment type="catalytic activity">
    <reaction evidence="1">
        <text>a long-chain fatty acid + holo-[ACP] + ATP = a long-chain fatty acyl-[ACP] + AMP + diphosphate</text>
        <dbReference type="Rhea" id="RHEA:45588"/>
        <dbReference type="Rhea" id="RHEA-COMP:9685"/>
        <dbReference type="Rhea" id="RHEA-COMP:12682"/>
        <dbReference type="ChEBI" id="CHEBI:30616"/>
        <dbReference type="ChEBI" id="CHEBI:33019"/>
        <dbReference type="ChEBI" id="CHEBI:57560"/>
        <dbReference type="ChEBI" id="CHEBI:64479"/>
        <dbReference type="ChEBI" id="CHEBI:133243"/>
        <dbReference type="ChEBI" id="CHEBI:456215"/>
        <dbReference type="EC" id="6.2.1.20"/>
    </reaction>
</comment>
<comment type="subcellular location">
    <subcellularLocation>
        <location evidence="1">Cell inner membrane</location>
        <topology evidence="1">Multi-pass membrane protein</topology>
    </subcellularLocation>
</comment>
<comment type="similarity">
    <text evidence="1">In the N-terminal section; belongs to the 2-acyl-GPE acetyltransferase family.</text>
</comment>
<comment type="similarity">
    <text evidence="1">In the C-terminal section; belongs to the ATP-dependent AMP-binding enzyme family.</text>
</comment>
<name>AAS_SALCH</name>
<proteinExistence type="inferred from homology"/>
<protein>
    <recommendedName>
        <fullName evidence="1">Bifunctional protein Aas</fullName>
    </recommendedName>
    <domain>
        <recommendedName>
            <fullName evidence="1">2-acylglycerophosphoethanolamine acyltransferase</fullName>
            <ecNumber evidence="1">2.3.1.40</ecNumber>
        </recommendedName>
        <alternativeName>
            <fullName evidence="1">2-acyl-GPE acyltransferase</fullName>
        </alternativeName>
        <alternativeName>
            <fullName evidence="1">Acyl-[acyl-carrier-protein]--phospholipid O-acyltransferase</fullName>
        </alternativeName>
    </domain>
    <domain>
        <recommendedName>
            <fullName evidence="1">Acyl-[acyl-carrier-protein] synthetase</fullName>
            <ecNumber evidence="1">6.2.1.20</ecNumber>
        </recommendedName>
        <alternativeName>
            <fullName evidence="1">Acyl-ACP synthetase</fullName>
        </alternativeName>
        <alternativeName>
            <fullName evidence="1">Long-chain-fatty-acid--[acyl-carrier-protein] ligase</fullName>
        </alternativeName>
    </domain>
</protein>
<reference key="1">
    <citation type="journal article" date="2005" name="Nucleic Acids Res.">
        <title>The genome sequence of Salmonella enterica serovar Choleraesuis, a highly invasive and resistant zoonotic pathogen.</title>
        <authorList>
            <person name="Chiu C.-H."/>
            <person name="Tang P."/>
            <person name="Chu C."/>
            <person name="Hu S."/>
            <person name="Bao Q."/>
            <person name="Yu J."/>
            <person name="Chou Y.-Y."/>
            <person name="Wang H.-S."/>
            <person name="Lee Y.-S."/>
        </authorList>
    </citation>
    <scope>NUCLEOTIDE SEQUENCE [LARGE SCALE GENOMIC DNA]</scope>
    <source>
        <strain>SC-B67</strain>
    </source>
</reference>